<feature type="chain" id="PRO_1000165308" description="Small ribosomal subunit protein uS8">
    <location>
        <begin position="1"/>
        <end position="132"/>
    </location>
</feature>
<accession>B8DW27</accession>
<sequence>MTMTDPIADMLTRLRNASAAKHETVDMPYSKFKKNIAEILKREGYIADFTAKEARVGQTLEVTLKYGPHGERSIQGIKRVSKPGLRRYAKSDALPMPLGGLGIAIISTSSGLLTQKECLDRGIGGEIVAYVW</sequence>
<proteinExistence type="inferred from homology"/>
<name>RS8_BIFA0</name>
<protein>
    <recommendedName>
        <fullName evidence="1">Small ribosomal subunit protein uS8</fullName>
    </recommendedName>
    <alternativeName>
        <fullName evidence="2">30S ribosomal protein S8</fullName>
    </alternativeName>
</protein>
<dbReference type="EMBL" id="CP001213">
    <property type="protein sequence ID" value="ACL28678.1"/>
    <property type="molecule type" value="Genomic_DNA"/>
</dbReference>
<dbReference type="RefSeq" id="WP_004268594.1">
    <property type="nucleotide sequence ID" value="NC_011835.1"/>
</dbReference>
<dbReference type="SMR" id="B8DW27"/>
<dbReference type="STRING" id="442563.BLA_0376"/>
<dbReference type="GeneID" id="29696143"/>
<dbReference type="KEGG" id="bla:BLA_0376"/>
<dbReference type="HOGENOM" id="CLU_098428_0_1_11"/>
<dbReference type="Proteomes" id="UP000002456">
    <property type="component" value="Chromosome"/>
</dbReference>
<dbReference type="GO" id="GO:1990904">
    <property type="term" value="C:ribonucleoprotein complex"/>
    <property type="evidence" value="ECO:0007669"/>
    <property type="project" value="UniProtKB-KW"/>
</dbReference>
<dbReference type="GO" id="GO:0005840">
    <property type="term" value="C:ribosome"/>
    <property type="evidence" value="ECO:0007669"/>
    <property type="project" value="UniProtKB-KW"/>
</dbReference>
<dbReference type="GO" id="GO:0019843">
    <property type="term" value="F:rRNA binding"/>
    <property type="evidence" value="ECO:0007669"/>
    <property type="project" value="UniProtKB-UniRule"/>
</dbReference>
<dbReference type="GO" id="GO:0003735">
    <property type="term" value="F:structural constituent of ribosome"/>
    <property type="evidence" value="ECO:0007669"/>
    <property type="project" value="InterPro"/>
</dbReference>
<dbReference type="GO" id="GO:0006412">
    <property type="term" value="P:translation"/>
    <property type="evidence" value="ECO:0007669"/>
    <property type="project" value="UniProtKB-UniRule"/>
</dbReference>
<dbReference type="FunFam" id="3.30.1370.30:FF:000002">
    <property type="entry name" value="30S ribosomal protein S8"/>
    <property type="match status" value="1"/>
</dbReference>
<dbReference type="FunFam" id="3.30.1490.10:FF:000001">
    <property type="entry name" value="30S ribosomal protein S8"/>
    <property type="match status" value="1"/>
</dbReference>
<dbReference type="Gene3D" id="3.30.1370.30">
    <property type="match status" value="1"/>
</dbReference>
<dbReference type="Gene3D" id="3.30.1490.10">
    <property type="match status" value="1"/>
</dbReference>
<dbReference type="HAMAP" id="MF_01302_B">
    <property type="entry name" value="Ribosomal_uS8_B"/>
    <property type="match status" value="1"/>
</dbReference>
<dbReference type="InterPro" id="IPR000630">
    <property type="entry name" value="Ribosomal_uS8"/>
</dbReference>
<dbReference type="InterPro" id="IPR035987">
    <property type="entry name" value="Ribosomal_uS8_sf"/>
</dbReference>
<dbReference type="NCBIfam" id="NF001109">
    <property type="entry name" value="PRK00136.1"/>
    <property type="match status" value="1"/>
</dbReference>
<dbReference type="PANTHER" id="PTHR11758">
    <property type="entry name" value="40S RIBOSOMAL PROTEIN S15A"/>
    <property type="match status" value="1"/>
</dbReference>
<dbReference type="Pfam" id="PF00410">
    <property type="entry name" value="Ribosomal_S8"/>
    <property type="match status" value="1"/>
</dbReference>
<dbReference type="SUPFAM" id="SSF56047">
    <property type="entry name" value="Ribosomal protein S8"/>
    <property type="match status" value="1"/>
</dbReference>
<keyword id="KW-1185">Reference proteome</keyword>
<keyword id="KW-0687">Ribonucleoprotein</keyword>
<keyword id="KW-0689">Ribosomal protein</keyword>
<keyword id="KW-0694">RNA-binding</keyword>
<keyword id="KW-0699">rRNA-binding</keyword>
<evidence type="ECO:0000255" key="1">
    <source>
        <dbReference type="HAMAP-Rule" id="MF_01302"/>
    </source>
</evidence>
<evidence type="ECO:0000305" key="2"/>
<organism>
    <name type="scientific">Bifidobacterium animalis subsp. lactis (strain AD011)</name>
    <dbReference type="NCBI Taxonomy" id="442563"/>
    <lineage>
        <taxon>Bacteria</taxon>
        <taxon>Bacillati</taxon>
        <taxon>Actinomycetota</taxon>
        <taxon>Actinomycetes</taxon>
        <taxon>Bifidobacteriales</taxon>
        <taxon>Bifidobacteriaceae</taxon>
        <taxon>Bifidobacterium</taxon>
    </lineage>
</organism>
<gene>
    <name evidence="1" type="primary">rpsH</name>
    <name type="ordered locus">BLA_0376</name>
</gene>
<comment type="function">
    <text evidence="1">One of the primary rRNA binding proteins, it binds directly to 16S rRNA central domain where it helps coordinate assembly of the platform of the 30S subunit.</text>
</comment>
<comment type="subunit">
    <text evidence="1">Part of the 30S ribosomal subunit. Contacts proteins S5 and S12.</text>
</comment>
<comment type="similarity">
    <text evidence="1">Belongs to the universal ribosomal protein uS8 family.</text>
</comment>
<reference key="1">
    <citation type="journal article" date="2009" name="J. Bacteriol.">
        <title>Genome sequence of the probiotic bacterium Bifidobacterium animalis subsp. lactis AD011.</title>
        <authorList>
            <person name="Kim J.F."/>
            <person name="Jeong H."/>
            <person name="Yu D.S."/>
            <person name="Choi S.-H."/>
            <person name="Hur C.-G."/>
            <person name="Park M.-S."/>
            <person name="Yoon S.H."/>
            <person name="Kim D.-W."/>
            <person name="Ji G.E."/>
            <person name="Park H.-S."/>
            <person name="Oh T.K."/>
        </authorList>
    </citation>
    <scope>NUCLEOTIDE SEQUENCE [LARGE SCALE GENOMIC DNA]</scope>
    <source>
        <strain>AD011</strain>
    </source>
</reference>